<keyword id="KW-0150">Chloroplast</keyword>
<keyword id="KW-0472">Membrane</keyword>
<keyword id="KW-0602">Photosynthesis</keyword>
<keyword id="KW-0934">Plastid</keyword>
<keyword id="KW-0677">Repeat</keyword>
<keyword id="KW-0793">Thylakoid</keyword>
<keyword id="KW-0802">TPR repeat</keyword>
<protein>
    <recommendedName>
        <fullName evidence="1">Photosystem I assembly protein Ycf3</fullName>
    </recommendedName>
</protein>
<dbReference type="EMBL" id="AY916449">
    <property type="protein sequence ID" value="AAW82504.1"/>
    <property type="molecule type" value="Genomic_DNA"/>
</dbReference>
<dbReference type="RefSeq" id="YP_358579.1">
    <property type="nucleotide sequence ID" value="NC_007499.1"/>
</dbReference>
<dbReference type="SMR" id="Q3BAN9"/>
<dbReference type="GeneID" id="3741677"/>
<dbReference type="GO" id="GO:0009535">
    <property type="term" value="C:chloroplast thylakoid membrane"/>
    <property type="evidence" value="ECO:0007669"/>
    <property type="project" value="UniProtKB-SubCell"/>
</dbReference>
<dbReference type="GO" id="GO:0015979">
    <property type="term" value="P:photosynthesis"/>
    <property type="evidence" value="ECO:0007669"/>
    <property type="project" value="UniProtKB-UniRule"/>
</dbReference>
<dbReference type="FunFam" id="1.25.40.10:FF:000004">
    <property type="entry name" value="Photosystem I assembly protein Ycf3"/>
    <property type="match status" value="1"/>
</dbReference>
<dbReference type="Gene3D" id="1.25.40.10">
    <property type="entry name" value="Tetratricopeptide repeat domain"/>
    <property type="match status" value="1"/>
</dbReference>
<dbReference type="HAMAP" id="MF_00439">
    <property type="entry name" value="Ycf3"/>
    <property type="match status" value="1"/>
</dbReference>
<dbReference type="InterPro" id="IPR022818">
    <property type="entry name" value="PSI_Ycf3_assembly"/>
</dbReference>
<dbReference type="InterPro" id="IPR011990">
    <property type="entry name" value="TPR-like_helical_dom_sf"/>
</dbReference>
<dbReference type="InterPro" id="IPR019734">
    <property type="entry name" value="TPR_rpt"/>
</dbReference>
<dbReference type="InterPro" id="IPR051685">
    <property type="entry name" value="Ycf3/AcsC/BcsC/TPR_MFPF"/>
</dbReference>
<dbReference type="NCBIfam" id="NF002725">
    <property type="entry name" value="PRK02603.1"/>
    <property type="match status" value="1"/>
</dbReference>
<dbReference type="PANTHER" id="PTHR44943">
    <property type="entry name" value="CELLULOSE SYNTHASE OPERON PROTEIN C"/>
    <property type="match status" value="1"/>
</dbReference>
<dbReference type="PANTHER" id="PTHR44943:SF8">
    <property type="entry name" value="TPR REPEAT-CONTAINING PROTEIN MJ0263"/>
    <property type="match status" value="1"/>
</dbReference>
<dbReference type="Pfam" id="PF00515">
    <property type="entry name" value="TPR_1"/>
    <property type="match status" value="1"/>
</dbReference>
<dbReference type="SMART" id="SM00028">
    <property type="entry name" value="TPR"/>
    <property type="match status" value="3"/>
</dbReference>
<dbReference type="SUPFAM" id="SSF48452">
    <property type="entry name" value="TPR-like"/>
    <property type="match status" value="1"/>
</dbReference>
<dbReference type="PROSITE" id="PS50005">
    <property type="entry name" value="TPR"/>
    <property type="match status" value="3"/>
</dbReference>
<dbReference type="PROSITE" id="PS50293">
    <property type="entry name" value="TPR_REGION"/>
    <property type="match status" value="1"/>
</dbReference>
<accession>Q3BAN9</accession>
<sequence>MPRSRINGNFIDKTSSIVANILLRIIPTTSGEKKAFTYYRDGMSAQSEGNYAEALQNYYEATRPEIDPYDRSYILYNIGLIHTSNGEHTKALEYYFRALERNPFLPQAFNNMAVICHYRGEQAILQGDSEIAEAWFDQAAEYWKQAIALTPGNYIEAHNWLKITRRFE</sequence>
<organism>
    <name type="scientific">Phalaenopsis aphrodite subsp. formosana</name>
    <name type="common">Moth orchid</name>
    <dbReference type="NCBI Taxonomy" id="308872"/>
    <lineage>
        <taxon>Eukaryota</taxon>
        <taxon>Viridiplantae</taxon>
        <taxon>Streptophyta</taxon>
        <taxon>Embryophyta</taxon>
        <taxon>Tracheophyta</taxon>
        <taxon>Spermatophyta</taxon>
        <taxon>Magnoliopsida</taxon>
        <taxon>Liliopsida</taxon>
        <taxon>Asparagales</taxon>
        <taxon>Orchidaceae</taxon>
        <taxon>Epidendroideae</taxon>
        <taxon>Vandeae</taxon>
        <taxon>Aeridinae</taxon>
        <taxon>Phalaenopsis</taxon>
    </lineage>
</organism>
<geneLocation type="chloroplast"/>
<feature type="chain" id="PRO_0000275631" description="Photosystem I assembly protein Ycf3">
    <location>
        <begin position="1"/>
        <end position="168"/>
    </location>
</feature>
<feature type="repeat" description="TPR 1">
    <location>
        <begin position="35"/>
        <end position="68"/>
    </location>
</feature>
<feature type="repeat" description="TPR 2">
    <location>
        <begin position="72"/>
        <end position="105"/>
    </location>
</feature>
<feature type="repeat" description="TPR 3">
    <location>
        <begin position="120"/>
        <end position="153"/>
    </location>
</feature>
<gene>
    <name evidence="1" type="primary">ycf3</name>
</gene>
<comment type="function">
    <text evidence="1">Essential for the assembly of the photosystem I (PSI) complex. May act as a chaperone-like factor to guide the assembly of the PSI subunits.</text>
</comment>
<comment type="subcellular location">
    <subcellularLocation>
        <location evidence="1">Plastid</location>
        <location evidence="1">Chloroplast thylakoid membrane</location>
        <topology evidence="1">Peripheral membrane protein</topology>
    </subcellularLocation>
</comment>
<comment type="similarity">
    <text evidence="1">Belongs to the Ycf3 family.</text>
</comment>
<evidence type="ECO:0000255" key="1">
    <source>
        <dbReference type="HAMAP-Rule" id="MF_00439"/>
    </source>
</evidence>
<reference key="1">
    <citation type="journal article" date="2006" name="Mol. Biol. Evol.">
        <title>The chloroplast genome of Phalaenopsis aphrodite (Orchidaceae): comparative analysis of evolutionary rate with that of grasses and its phylogenetic implications.</title>
        <authorList>
            <person name="Chang C.-C."/>
            <person name="Lin H.-C."/>
            <person name="Lin I.-P."/>
            <person name="Chow T.-Y."/>
            <person name="Chen H.-H."/>
            <person name="Chen W.-H."/>
            <person name="Cheng C.-H."/>
            <person name="Lin C.-Y."/>
            <person name="Liu S.-M."/>
            <person name="Chang C.-C."/>
            <person name="Chaw S.-M."/>
        </authorList>
    </citation>
    <scope>NUCLEOTIDE SEQUENCE [LARGE SCALE GENOMIC DNA]</scope>
    <source>
        <strain>cv. Taisugar TS-97</strain>
    </source>
</reference>
<proteinExistence type="inferred from homology"/>
<name>YCF3_PHAAO</name>